<name>REG7_PYRAB</name>
<organism>
    <name type="scientific">Pyrococcus abyssi (strain GE5 / Orsay)</name>
    <dbReference type="NCBI Taxonomy" id="272844"/>
    <lineage>
        <taxon>Archaea</taxon>
        <taxon>Methanobacteriati</taxon>
        <taxon>Methanobacteriota</taxon>
        <taxon>Thermococci</taxon>
        <taxon>Thermococcales</taxon>
        <taxon>Thermococcaceae</taxon>
        <taxon>Pyrococcus</taxon>
    </lineage>
</organism>
<reference key="1">
    <citation type="journal article" date="2003" name="Mol. Microbiol.">
        <title>An integrated analysis of the genome of the hyperthermophilic archaeon Pyrococcus abyssi.</title>
        <authorList>
            <person name="Cohen G.N."/>
            <person name="Barbe V."/>
            <person name="Flament D."/>
            <person name="Galperin M."/>
            <person name="Heilig R."/>
            <person name="Lecompte O."/>
            <person name="Poch O."/>
            <person name="Prieur D."/>
            <person name="Querellou J."/>
            <person name="Ripp R."/>
            <person name="Thierry J.-C."/>
            <person name="Van der Oost J."/>
            <person name="Weissenbach J."/>
            <person name="Zivanovic Y."/>
            <person name="Forterre P."/>
        </authorList>
    </citation>
    <scope>NUCLEOTIDE SEQUENCE [LARGE SCALE GENOMIC DNA]</scope>
    <source>
        <strain>GE5 / Orsay</strain>
    </source>
</reference>
<reference key="2">
    <citation type="journal article" date="2012" name="Curr. Microbiol.">
        <title>Re-annotation of two hyperthermophilic archaea Pyrococcus abyssi GE5 and Pyrococcus furiosus DSM 3638.</title>
        <authorList>
            <person name="Gao J."/>
            <person name="Wang J."/>
        </authorList>
    </citation>
    <scope>GENOME REANNOTATION</scope>
    <source>
        <strain>GE5 / Orsay</strain>
    </source>
</reference>
<feature type="chain" id="PRO_0000111770" description="HTH-type transcriptional regulator LrpA">
    <location>
        <begin position="1"/>
        <end position="141"/>
    </location>
</feature>
<feature type="domain" description="HTH asnC-type" evidence="2">
    <location>
        <begin position="2"/>
        <end position="63"/>
    </location>
</feature>
<feature type="DNA-binding region" description="H-T-H motif" evidence="2">
    <location>
        <begin position="21"/>
        <end position="40"/>
    </location>
</feature>
<gene>
    <name type="primary">lrpA</name>
    <name type="ordered locus">PYRAB05700</name>
    <name type="ORF">PAB0392</name>
</gene>
<evidence type="ECO:0000250" key="1">
    <source>
        <dbReference type="UniProtKB" id="P42180"/>
    </source>
</evidence>
<evidence type="ECO:0000255" key="2">
    <source>
        <dbReference type="PROSITE-ProRule" id="PRU00319"/>
    </source>
</evidence>
<protein>
    <recommendedName>
        <fullName>HTH-type transcriptional regulator LrpA</fullName>
    </recommendedName>
</protein>
<dbReference type="EMBL" id="AJ248284">
    <property type="protein sequence ID" value="CAB49492.1"/>
    <property type="molecule type" value="Genomic_DNA"/>
</dbReference>
<dbReference type="EMBL" id="HE613800">
    <property type="protein sequence ID" value="CCE69962.1"/>
    <property type="molecule type" value="Genomic_DNA"/>
</dbReference>
<dbReference type="PIR" id="E75176">
    <property type="entry name" value="E75176"/>
</dbReference>
<dbReference type="RefSeq" id="WP_010867694.1">
    <property type="nucleotide sequence ID" value="NC_000868.1"/>
</dbReference>
<dbReference type="SMR" id="Q9V159"/>
<dbReference type="STRING" id="272844.PAB0392"/>
<dbReference type="KEGG" id="pab:PAB0392"/>
<dbReference type="PATRIC" id="fig|272844.11.peg.608"/>
<dbReference type="eggNOG" id="arCOG01580">
    <property type="taxonomic scope" value="Archaea"/>
</dbReference>
<dbReference type="HOGENOM" id="CLU_091233_5_4_2"/>
<dbReference type="OrthoDB" id="6995at2157"/>
<dbReference type="PhylomeDB" id="Q9V159"/>
<dbReference type="Proteomes" id="UP000000810">
    <property type="component" value="Chromosome"/>
</dbReference>
<dbReference type="Proteomes" id="UP000009139">
    <property type="component" value="Chromosome"/>
</dbReference>
<dbReference type="GO" id="GO:0043565">
    <property type="term" value="F:sequence-specific DNA binding"/>
    <property type="evidence" value="ECO:0007669"/>
    <property type="project" value="InterPro"/>
</dbReference>
<dbReference type="CDD" id="cd00090">
    <property type="entry name" value="HTH_ARSR"/>
    <property type="match status" value="1"/>
</dbReference>
<dbReference type="Gene3D" id="3.30.70.920">
    <property type="match status" value="1"/>
</dbReference>
<dbReference type="Gene3D" id="1.10.10.10">
    <property type="entry name" value="Winged helix-like DNA-binding domain superfamily/Winged helix DNA-binding domain"/>
    <property type="match status" value="1"/>
</dbReference>
<dbReference type="InterPro" id="IPR011991">
    <property type="entry name" value="ArsR-like_HTH"/>
</dbReference>
<dbReference type="InterPro" id="IPR000485">
    <property type="entry name" value="AsnC-type_HTH_dom"/>
</dbReference>
<dbReference type="InterPro" id="IPR011008">
    <property type="entry name" value="Dimeric_a/b-barrel"/>
</dbReference>
<dbReference type="InterPro" id="IPR053456">
    <property type="entry name" value="HTH-LrpA_regulator"/>
</dbReference>
<dbReference type="InterPro" id="IPR050684">
    <property type="entry name" value="HTH-Siroheme_Decarb"/>
</dbReference>
<dbReference type="InterPro" id="IPR019888">
    <property type="entry name" value="Tscrpt_reg_AsnC-like"/>
</dbReference>
<dbReference type="InterPro" id="IPR019887">
    <property type="entry name" value="Tscrpt_reg_AsnC/Lrp_C"/>
</dbReference>
<dbReference type="InterPro" id="IPR019885">
    <property type="entry name" value="Tscrpt_reg_HTH_AsnC-type_CS"/>
</dbReference>
<dbReference type="InterPro" id="IPR036388">
    <property type="entry name" value="WH-like_DNA-bd_sf"/>
</dbReference>
<dbReference type="InterPro" id="IPR036390">
    <property type="entry name" value="WH_DNA-bd_sf"/>
</dbReference>
<dbReference type="NCBIfam" id="NF040820">
    <property type="entry name" value="trans_reg_LrpA"/>
    <property type="match status" value="1"/>
</dbReference>
<dbReference type="PANTHER" id="PTHR43413:SF7">
    <property type="entry name" value="HTH-TYPE TRANSCRIPTIONAL REGULATOR PTR2"/>
    <property type="match status" value="1"/>
</dbReference>
<dbReference type="PANTHER" id="PTHR43413">
    <property type="entry name" value="TRANSCRIPTIONAL REGULATOR, ASNC FAMILY"/>
    <property type="match status" value="1"/>
</dbReference>
<dbReference type="Pfam" id="PF01037">
    <property type="entry name" value="AsnC_trans_reg"/>
    <property type="match status" value="1"/>
</dbReference>
<dbReference type="Pfam" id="PF13412">
    <property type="entry name" value="HTH_24"/>
    <property type="match status" value="1"/>
</dbReference>
<dbReference type="PRINTS" id="PR00033">
    <property type="entry name" value="HTHASNC"/>
</dbReference>
<dbReference type="SMART" id="SM00344">
    <property type="entry name" value="HTH_ASNC"/>
    <property type="match status" value="1"/>
</dbReference>
<dbReference type="SUPFAM" id="SSF54909">
    <property type="entry name" value="Dimeric alpha+beta barrel"/>
    <property type="match status" value="1"/>
</dbReference>
<dbReference type="SUPFAM" id="SSF46785">
    <property type="entry name" value="Winged helix' DNA-binding domain"/>
    <property type="match status" value="1"/>
</dbReference>
<dbReference type="PROSITE" id="PS00519">
    <property type="entry name" value="HTH_ASNC_1"/>
    <property type="match status" value="1"/>
</dbReference>
<dbReference type="PROSITE" id="PS50956">
    <property type="entry name" value="HTH_ASNC_2"/>
    <property type="match status" value="1"/>
</dbReference>
<sequence>MVDERDKIILDILSKDARTPFTEIAKILGISETAVRKRVKALEEKGIIEGYTIKINPKKLGYSLVTITGVDTRPEKLFEVAEKLKEFEFVRELYLSSGDHMIMAVIWAKDGEDLADIISNKIGKIDGVTKVCPAIILERLK</sequence>
<comment type="function">
    <text evidence="1">DNA-binding protein that negatively regulates its own transcription. Interferes with RNA polymerase (RNAP) recruitment by inhibiting the association of RNAP with the TBP-TFB promoter complex.</text>
</comment>
<comment type="subunit">
    <text evidence="1">Homooctamer; tetramer of dimers.</text>
</comment>
<accession>Q9V159</accession>
<accession>G8ZJ35</accession>
<keyword id="KW-0238">DNA-binding</keyword>
<keyword id="KW-0678">Repressor</keyword>
<keyword id="KW-0804">Transcription</keyword>
<keyword id="KW-0805">Transcription regulation</keyword>
<proteinExistence type="inferred from homology"/>